<name>SHLB1_RAT</name>
<dbReference type="EMBL" id="BC079085">
    <property type="protein sequence ID" value="AAH79085.1"/>
    <property type="molecule type" value="mRNA"/>
</dbReference>
<dbReference type="RefSeq" id="NP_001011929.1">
    <property type="nucleotide sequence ID" value="NM_001011929.1"/>
</dbReference>
<dbReference type="SMR" id="Q6AYE2"/>
<dbReference type="BioGRID" id="253783">
    <property type="interactions" value="1"/>
</dbReference>
<dbReference type="FunCoup" id="Q6AYE2">
    <property type="interactions" value="3378"/>
</dbReference>
<dbReference type="IntAct" id="Q6AYE2">
    <property type="interactions" value="3"/>
</dbReference>
<dbReference type="STRING" id="10116.ENSRNOP00000074019"/>
<dbReference type="iPTMnet" id="Q6AYE2"/>
<dbReference type="PhosphoSitePlus" id="Q6AYE2"/>
<dbReference type="jPOST" id="Q6AYE2"/>
<dbReference type="PaxDb" id="10116-ENSRNOP00000017771"/>
<dbReference type="Ensembl" id="ENSRNOT00000017770.6">
    <property type="protein sequence ID" value="ENSRNOP00000017771.4"/>
    <property type="gene ID" value="ENSRNOG00000012957.8"/>
</dbReference>
<dbReference type="GeneID" id="292156"/>
<dbReference type="KEGG" id="rno:292156"/>
<dbReference type="AGR" id="RGD:1304859"/>
<dbReference type="CTD" id="51100"/>
<dbReference type="RGD" id="1304859">
    <property type="gene designation" value="Sh3glb1"/>
</dbReference>
<dbReference type="eggNOG" id="KOG3725">
    <property type="taxonomic scope" value="Eukaryota"/>
</dbReference>
<dbReference type="GeneTree" id="ENSGT00940000155667"/>
<dbReference type="HOGENOM" id="CLU_043817_1_1_1"/>
<dbReference type="InParanoid" id="Q6AYE2"/>
<dbReference type="OrthoDB" id="14167at2759"/>
<dbReference type="PRO" id="PR:Q6AYE2"/>
<dbReference type="Proteomes" id="UP000002494">
    <property type="component" value="Chromosome 2"/>
</dbReference>
<dbReference type="Bgee" id="ENSRNOG00000012957">
    <property type="expression patterns" value="Expressed in testis and 19 other cell types or tissues"/>
</dbReference>
<dbReference type="ExpressionAtlas" id="Q6AYE2">
    <property type="expression patterns" value="baseline and differential"/>
</dbReference>
<dbReference type="GO" id="GO:0000421">
    <property type="term" value="C:autophagosome membrane"/>
    <property type="evidence" value="ECO:0000266"/>
    <property type="project" value="RGD"/>
</dbReference>
<dbReference type="GO" id="GO:0005737">
    <property type="term" value="C:cytoplasm"/>
    <property type="evidence" value="ECO:0000266"/>
    <property type="project" value="RGD"/>
</dbReference>
<dbReference type="GO" id="GO:0005769">
    <property type="term" value="C:early endosome"/>
    <property type="evidence" value="ECO:0000314"/>
    <property type="project" value="RGD"/>
</dbReference>
<dbReference type="GO" id="GO:0000139">
    <property type="term" value="C:Golgi membrane"/>
    <property type="evidence" value="ECO:0007669"/>
    <property type="project" value="UniProtKB-SubCell"/>
</dbReference>
<dbReference type="GO" id="GO:0016020">
    <property type="term" value="C:membrane"/>
    <property type="evidence" value="ECO:0000266"/>
    <property type="project" value="RGD"/>
</dbReference>
<dbReference type="GO" id="GO:0030496">
    <property type="term" value="C:midbody"/>
    <property type="evidence" value="ECO:0000266"/>
    <property type="project" value="RGD"/>
</dbReference>
<dbReference type="GO" id="GO:0005741">
    <property type="term" value="C:mitochondrial outer membrane"/>
    <property type="evidence" value="ECO:0007669"/>
    <property type="project" value="UniProtKB-SubCell"/>
</dbReference>
<dbReference type="GO" id="GO:0043025">
    <property type="term" value="C:neuronal cell body"/>
    <property type="evidence" value="ECO:0000314"/>
    <property type="project" value="RGD"/>
</dbReference>
<dbReference type="GO" id="GO:0032991">
    <property type="term" value="C:protein-containing complex"/>
    <property type="evidence" value="ECO:0000266"/>
    <property type="project" value="RGD"/>
</dbReference>
<dbReference type="GO" id="GO:0008021">
    <property type="term" value="C:synaptic vesicle"/>
    <property type="evidence" value="ECO:0000314"/>
    <property type="project" value="RGD"/>
</dbReference>
<dbReference type="GO" id="GO:0005504">
    <property type="term" value="F:fatty acid binding"/>
    <property type="evidence" value="ECO:0000266"/>
    <property type="project" value="RGD"/>
</dbReference>
<dbReference type="GO" id="GO:0042802">
    <property type="term" value="F:identical protein binding"/>
    <property type="evidence" value="ECO:0000266"/>
    <property type="project" value="RGD"/>
</dbReference>
<dbReference type="GO" id="GO:0042171">
    <property type="term" value="F:lysophosphatidic acid acyltransferase activity"/>
    <property type="evidence" value="ECO:0000266"/>
    <property type="project" value="RGD"/>
</dbReference>
<dbReference type="GO" id="GO:0141038">
    <property type="term" value="F:phosphatidylinositol 3-kinase activator activity"/>
    <property type="evidence" value="ECO:0000266"/>
    <property type="project" value="RGD"/>
</dbReference>
<dbReference type="GO" id="GO:0042803">
    <property type="term" value="F:protein homodimerization activity"/>
    <property type="evidence" value="ECO:0000266"/>
    <property type="project" value="RGD"/>
</dbReference>
<dbReference type="GO" id="GO:0051084">
    <property type="term" value="P:'de novo' post-translational protein folding"/>
    <property type="evidence" value="ECO:0000266"/>
    <property type="project" value="RGD"/>
</dbReference>
<dbReference type="GO" id="GO:0006915">
    <property type="term" value="P:apoptotic process"/>
    <property type="evidence" value="ECO:0000266"/>
    <property type="project" value="RGD"/>
</dbReference>
<dbReference type="GO" id="GO:0048102">
    <property type="term" value="P:autophagic cell death"/>
    <property type="evidence" value="ECO:0000266"/>
    <property type="project" value="RGD"/>
</dbReference>
<dbReference type="GO" id="GO:0034198">
    <property type="term" value="P:cellular response to amino acid starvation"/>
    <property type="evidence" value="ECO:0000266"/>
    <property type="project" value="RGD"/>
</dbReference>
<dbReference type="GO" id="GO:0042149">
    <property type="term" value="P:cellular response to glucose starvation"/>
    <property type="evidence" value="ECO:0000266"/>
    <property type="project" value="RGD"/>
</dbReference>
<dbReference type="GO" id="GO:0090148">
    <property type="term" value="P:membrane fission"/>
    <property type="evidence" value="ECO:0000266"/>
    <property type="project" value="RGD"/>
</dbReference>
<dbReference type="GO" id="GO:0061024">
    <property type="term" value="P:membrane organization"/>
    <property type="evidence" value="ECO:0000318"/>
    <property type="project" value="GO_Central"/>
</dbReference>
<dbReference type="GO" id="GO:0006654">
    <property type="term" value="P:phosphatidic acid biosynthetic process"/>
    <property type="evidence" value="ECO:0000266"/>
    <property type="project" value="RGD"/>
</dbReference>
<dbReference type="GO" id="GO:0008654">
    <property type="term" value="P:phospholipid biosynthetic process"/>
    <property type="evidence" value="ECO:0000266"/>
    <property type="project" value="RGD"/>
</dbReference>
<dbReference type="GO" id="GO:2000786">
    <property type="term" value="P:positive regulation of autophagosome assembly"/>
    <property type="evidence" value="ECO:0000266"/>
    <property type="project" value="RGD"/>
</dbReference>
<dbReference type="GO" id="GO:0010508">
    <property type="term" value="P:positive regulation of autophagy"/>
    <property type="evidence" value="ECO:0000266"/>
    <property type="project" value="RGD"/>
</dbReference>
<dbReference type="GO" id="GO:1903861">
    <property type="term" value="P:positive regulation of dendrite extension"/>
    <property type="evidence" value="ECO:0000315"/>
    <property type="project" value="RGD"/>
</dbReference>
<dbReference type="GO" id="GO:0050775">
    <property type="term" value="P:positive regulation of dendrite morphogenesis"/>
    <property type="evidence" value="ECO:0000315"/>
    <property type="project" value="RGD"/>
</dbReference>
<dbReference type="GO" id="GO:1903749">
    <property type="term" value="P:positive regulation of establishment of protein localization to mitochondrion"/>
    <property type="evidence" value="ECO:0000266"/>
    <property type="project" value="RGD"/>
</dbReference>
<dbReference type="GO" id="GO:1903527">
    <property type="term" value="P:positive regulation of membrane tubulation"/>
    <property type="evidence" value="ECO:0000266"/>
    <property type="project" value="RGD"/>
</dbReference>
<dbReference type="GO" id="GO:0051388">
    <property type="term" value="P:positive regulation of neurotrophin TRK receptor signaling pathway"/>
    <property type="evidence" value="ECO:0000315"/>
    <property type="project" value="RGD"/>
</dbReference>
<dbReference type="GO" id="GO:0031334">
    <property type="term" value="P:positive regulation of protein-containing complex assembly"/>
    <property type="evidence" value="ECO:0000266"/>
    <property type="project" value="RGD"/>
</dbReference>
<dbReference type="GO" id="GO:1903778">
    <property type="term" value="P:protein localization to vacuolar membrane"/>
    <property type="evidence" value="ECO:0000266"/>
    <property type="project" value="RGD"/>
</dbReference>
<dbReference type="GO" id="GO:0032801">
    <property type="term" value="P:receptor catabolic process"/>
    <property type="evidence" value="ECO:0000266"/>
    <property type="project" value="RGD"/>
</dbReference>
<dbReference type="GO" id="GO:0032465">
    <property type="term" value="P:regulation of cytokinesis"/>
    <property type="evidence" value="ECO:0000266"/>
    <property type="project" value="RGD"/>
</dbReference>
<dbReference type="GO" id="GO:2000641">
    <property type="term" value="P:regulation of early endosome to late endosome transport"/>
    <property type="evidence" value="ECO:0000315"/>
    <property type="project" value="RGD"/>
</dbReference>
<dbReference type="CDD" id="cd07616">
    <property type="entry name" value="BAR_Endophilin_B1"/>
    <property type="match status" value="1"/>
</dbReference>
<dbReference type="CDD" id="cd11945">
    <property type="entry name" value="SH3_Endophilin_B1"/>
    <property type="match status" value="1"/>
</dbReference>
<dbReference type="FunFam" id="1.20.1270.60:FF:000017">
    <property type="entry name" value="endophilin-B2 isoform X1"/>
    <property type="match status" value="1"/>
</dbReference>
<dbReference type="FunFam" id="2.30.30.40:FF:000028">
    <property type="entry name" value="endophilin-B2 isoform X1"/>
    <property type="match status" value="1"/>
</dbReference>
<dbReference type="Gene3D" id="1.20.1270.60">
    <property type="entry name" value="Arfaptin homology (AH) domain/BAR domain"/>
    <property type="match status" value="1"/>
</dbReference>
<dbReference type="Gene3D" id="2.30.30.40">
    <property type="entry name" value="SH3 Domains"/>
    <property type="match status" value="1"/>
</dbReference>
<dbReference type="InterPro" id="IPR027267">
    <property type="entry name" value="AH/BAR_dom_sf"/>
</dbReference>
<dbReference type="InterPro" id="IPR004148">
    <property type="entry name" value="BAR_dom"/>
</dbReference>
<dbReference type="InterPro" id="IPR050384">
    <property type="entry name" value="Endophilin_SH3RF"/>
</dbReference>
<dbReference type="InterPro" id="IPR036028">
    <property type="entry name" value="SH3-like_dom_sf"/>
</dbReference>
<dbReference type="InterPro" id="IPR001452">
    <property type="entry name" value="SH3_domain"/>
</dbReference>
<dbReference type="InterPro" id="IPR035695">
    <property type="entry name" value="SH3GLB1_BAR"/>
</dbReference>
<dbReference type="InterPro" id="IPR028503">
    <property type="entry name" value="SH3GLB_SH3"/>
</dbReference>
<dbReference type="PANTHER" id="PTHR14167:SF52">
    <property type="entry name" value="ENDOPHILIN-B1"/>
    <property type="match status" value="1"/>
</dbReference>
<dbReference type="PANTHER" id="PTHR14167">
    <property type="entry name" value="SH3 DOMAIN-CONTAINING"/>
    <property type="match status" value="1"/>
</dbReference>
<dbReference type="Pfam" id="PF03114">
    <property type="entry name" value="BAR"/>
    <property type="match status" value="1"/>
</dbReference>
<dbReference type="Pfam" id="PF14604">
    <property type="entry name" value="SH3_9"/>
    <property type="match status" value="1"/>
</dbReference>
<dbReference type="SMART" id="SM00721">
    <property type="entry name" value="BAR"/>
    <property type="match status" value="1"/>
</dbReference>
<dbReference type="SMART" id="SM00326">
    <property type="entry name" value="SH3"/>
    <property type="match status" value="1"/>
</dbReference>
<dbReference type="SUPFAM" id="SSF103657">
    <property type="entry name" value="BAR/IMD domain-like"/>
    <property type="match status" value="1"/>
</dbReference>
<dbReference type="SUPFAM" id="SSF50044">
    <property type="entry name" value="SH3-domain"/>
    <property type="match status" value="1"/>
</dbReference>
<dbReference type="PROSITE" id="PS51021">
    <property type="entry name" value="BAR"/>
    <property type="match status" value="1"/>
</dbReference>
<dbReference type="PROSITE" id="PS50002">
    <property type="entry name" value="SH3"/>
    <property type="match status" value="1"/>
</dbReference>
<accession>Q6AYE2</accession>
<protein>
    <recommendedName>
        <fullName>Endophilin-B1</fullName>
    </recommendedName>
    <alternativeName>
        <fullName>SH3 domain-containing GRB2-like protein B1</fullName>
    </alternativeName>
</protein>
<comment type="function">
    <text evidence="2 3">May be required for normal outer mitochondrial membrane dynamics. Required for coatomer-mediated retrograde transport in certain cells. May recruit other proteins to membranes with high curvature. May promote membrane fusion. Involved in activation of caspase-dependent apoptosis by promoting BAX/BAK1 activation. Involved in caspase-independent apoptosis during nutrition starvation and involved in the regulation of autophagy. Activates lipid kinase activity of PIK3C3 during autophagy probably by associating with the PI3K complex II (PI3KC3-C2). Associated with PI3KC3-C2 during autophagy may regulate the trafficking of ATG9A from the Golgi complex to the peripheral cytoplasm for the formation of autophagosomes by inducing Golgi membrane tubulation and fragmentation. Involved in regulation of degradative endocytic trafficking and cytokinesis, probably in the context of PI3KC3-C2 (By similarity).</text>
</comment>
<comment type="subunit">
    <text evidence="2 3">Homodimer, and heterodimer with SH3GLB2. Binds BAX; induction of apoptosis augments BAX binding. Binds DNM1, HTT, AMPH, BIN1 and ARFGAP1. Interacts with UVRAG; UVRAG bridges the interaction to BECN1 indicative for an association with the PI3K complex II (PI3KC3-C2) (By similarity).</text>
</comment>
<comment type="subcellular location">
    <subcellularLocation>
        <location evidence="7">Cytoplasm</location>
    </subcellularLocation>
    <subcellularLocation>
        <location evidence="7">Golgi apparatus membrane</location>
        <topology evidence="7">Peripheral membrane protein</topology>
    </subcellularLocation>
    <subcellularLocation>
        <location evidence="2 3">Mitochondrion outer membrane</location>
        <topology evidence="2 3">Peripheral membrane protein</topology>
    </subcellularLocation>
    <subcellularLocation>
        <location evidence="3">Cytoplasmic vesicle</location>
        <location evidence="3">Autophagosome membrane</location>
    </subcellularLocation>
    <subcellularLocation>
        <location evidence="3">Midbody</location>
    </subcellularLocation>
    <text evidence="2 3 7">Association with the Golgi apparatus depends on the cell type. Following starvation colocalizes with ATG5 and LC3 autophagy-related protein(s)on autophagosomal membranes.</text>
</comment>
<comment type="tissue specificity">
    <text evidence="7">Expressed in brain, heart, lung and spleen. Low level in liver and testis.</text>
</comment>
<comment type="domain">
    <text evidence="7">An N-terminal amphipathic helix, the BAR domain and a second amphipathic helix inserted into helix 1 of the BAR domain (N-BAR domain) induce membrane curvature and bind curved membranes.</text>
</comment>
<comment type="PTM">
    <text evidence="1">Phosphorylated at Thr-145 by CDK5; this phosphorylation is required for autophagy induction in starved neurons and facilitates homodimerization.</text>
</comment>
<comment type="similarity">
    <text evidence="4">Belongs to the endophilin family.</text>
</comment>
<evidence type="ECO:0000250" key="1"/>
<evidence type="ECO:0000250" key="2">
    <source>
        <dbReference type="UniProtKB" id="Q9JK48"/>
    </source>
</evidence>
<evidence type="ECO:0000250" key="3">
    <source>
        <dbReference type="UniProtKB" id="Q9Y371"/>
    </source>
</evidence>
<evidence type="ECO:0000255" key="4"/>
<evidence type="ECO:0000255" key="5">
    <source>
        <dbReference type="PROSITE-ProRule" id="PRU00192"/>
    </source>
</evidence>
<evidence type="ECO:0000255" key="6">
    <source>
        <dbReference type="PROSITE-ProRule" id="PRU00361"/>
    </source>
</evidence>
<evidence type="ECO:0000269" key="7">
    <source>
    </source>
</evidence>
<evidence type="ECO:0000305" key="8"/>
<evidence type="ECO:0000312" key="9">
    <source>
        <dbReference type="EMBL" id="AAH79085.1"/>
    </source>
</evidence>
<gene>
    <name evidence="9" type="primary">Sh3glb1</name>
</gene>
<keyword id="KW-0007">Acetylation</keyword>
<keyword id="KW-0053">Apoptosis</keyword>
<keyword id="KW-0175">Coiled coil</keyword>
<keyword id="KW-0963">Cytoplasm</keyword>
<keyword id="KW-0968">Cytoplasmic vesicle</keyword>
<keyword id="KW-0333">Golgi apparatus</keyword>
<keyword id="KW-0446">Lipid-binding</keyword>
<keyword id="KW-0472">Membrane</keyword>
<keyword id="KW-0496">Mitochondrion</keyword>
<keyword id="KW-1000">Mitochondrion outer membrane</keyword>
<keyword id="KW-0597">Phosphoprotein</keyword>
<keyword id="KW-1185">Reference proteome</keyword>
<keyword id="KW-0728">SH3 domain</keyword>
<feature type="chain" id="PRO_0000307711" description="Endophilin-B1">
    <location>
        <begin position="1"/>
        <end position="365"/>
    </location>
</feature>
<feature type="domain" description="BAR" evidence="6">
    <location>
        <begin position="27"/>
        <end position="261"/>
    </location>
</feature>
<feature type="domain" description="SH3" evidence="5">
    <location>
        <begin position="305"/>
        <end position="365"/>
    </location>
</feature>
<feature type="region of interest" description="Required for membrane binding" evidence="3">
    <location>
        <begin position="1"/>
        <end position="37"/>
    </location>
</feature>
<feature type="region of interest" description="Membrane-binding amphipathic helix" evidence="3">
    <location>
        <begin position="1"/>
        <end position="30"/>
    </location>
</feature>
<feature type="coiled-coil region" evidence="4">
    <location>
        <begin position="156"/>
        <end position="185"/>
    </location>
</feature>
<feature type="modified residue" description="N-acetylmethionine" evidence="3">
    <location>
        <position position="1"/>
    </location>
</feature>
<feature type="modified residue" description="Phosphothreonine; by CDK5" evidence="3">
    <location>
        <position position="145"/>
    </location>
</feature>
<proteinExistence type="evidence at transcript level"/>
<organism>
    <name type="scientific">Rattus norvegicus</name>
    <name type="common">Rat</name>
    <dbReference type="NCBI Taxonomy" id="10116"/>
    <lineage>
        <taxon>Eukaryota</taxon>
        <taxon>Metazoa</taxon>
        <taxon>Chordata</taxon>
        <taxon>Craniata</taxon>
        <taxon>Vertebrata</taxon>
        <taxon>Euteleostomi</taxon>
        <taxon>Mammalia</taxon>
        <taxon>Eutheria</taxon>
        <taxon>Euarchontoglires</taxon>
        <taxon>Glires</taxon>
        <taxon>Rodentia</taxon>
        <taxon>Myomorpha</taxon>
        <taxon>Muroidea</taxon>
        <taxon>Muridae</taxon>
        <taxon>Murinae</taxon>
        <taxon>Rattus</taxon>
    </lineage>
</organism>
<reference evidence="9" key="1">
    <citation type="journal article" date="2004" name="Genome Res.">
        <title>The status, quality, and expansion of the NIH full-length cDNA project: the Mammalian Gene Collection (MGC).</title>
        <authorList>
            <consortium name="The MGC Project Team"/>
        </authorList>
    </citation>
    <scope>NUCLEOTIDE SEQUENCE [LARGE SCALE MRNA]</scope>
    <source>
        <tissue evidence="9">Lung</tissue>
    </source>
</reference>
<reference evidence="8" key="2">
    <citation type="journal article" date="2001" name="J. Cell Biol.">
        <title>Generation of high curvature membranes mediated by direct endophilin bilayer interactions.</title>
        <authorList>
            <person name="Farsad K."/>
            <person name="Ringstad N."/>
            <person name="Takei K."/>
            <person name="Floyd S.R."/>
            <person name="Rose K."/>
            <person name="De Camilli P."/>
        </authorList>
    </citation>
    <scope>SUBCELLULAR LOCATION</scope>
    <scope>TISSUE SPECIFICITY</scope>
    <scope>DOMAIN</scope>
</reference>
<sequence length="365" mass="40787">MNIMDFNVKKLAADAGTFLSRAVQFTEEKLGQAEKTELDAHLENLLSKAECTKVWTEKIMKQTEVLLQPNPNARIEEFVYEKLDRKAPSRINNPELLGQYMIDAGTEFGPGTAYGNALIKCGETQKRIGTADRELIQTSALNFLTPLRNFIEGDYKTIAKERKLLQNKRLDLDAAKTRLKKAKAAETKSSSEQELRITQSEFDRQAEITRLLLEGISSTHAHHLRCLNDFVEAQMTYYAQCYQYMLDLQKQLGSFPSNYVSNNNQTSGTPVPYTLSNTIGPSAVASTGSLVITCPPNLSDLKDSSSTRKARVLYDYDAANSTELSLLADEVITVFSVVGMDSDWLMGERGNQKGKVPITYLELLN</sequence>